<proteinExistence type="inferred from homology"/>
<feature type="chain" id="PRO_1000190081" description="Glycogen synthase">
    <location>
        <begin position="1"/>
        <end position="479"/>
    </location>
</feature>
<feature type="binding site" evidence="1">
    <location>
        <position position="15"/>
    </location>
    <ligand>
        <name>ADP-alpha-D-glucose</name>
        <dbReference type="ChEBI" id="CHEBI:57498"/>
    </ligand>
</feature>
<protein>
    <recommendedName>
        <fullName evidence="1">Glycogen synthase</fullName>
        <ecNumber evidence="1">2.4.1.21</ecNumber>
    </recommendedName>
    <alternativeName>
        <fullName evidence="1">Starch [bacterial glycogen] synthase</fullName>
    </alternativeName>
</protein>
<keyword id="KW-0320">Glycogen biosynthesis</keyword>
<keyword id="KW-0328">Glycosyltransferase</keyword>
<keyword id="KW-1185">Reference proteome</keyword>
<keyword id="KW-0808">Transferase</keyword>
<name>GLGA_ROSDO</name>
<evidence type="ECO:0000255" key="1">
    <source>
        <dbReference type="HAMAP-Rule" id="MF_00484"/>
    </source>
</evidence>
<comment type="function">
    <text evidence="1">Synthesizes alpha-1,4-glucan chains using ADP-glucose.</text>
</comment>
<comment type="catalytic activity">
    <reaction evidence="1">
        <text>[(1-&gt;4)-alpha-D-glucosyl](n) + ADP-alpha-D-glucose = [(1-&gt;4)-alpha-D-glucosyl](n+1) + ADP + H(+)</text>
        <dbReference type="Rhea" id="RHEA:18189"/>
        <dbReference type="Rhea" id="RHEA-COMP:9584"/>
        <dbReference type="Rhea" id="RHEA-COMP:9587"/>
        <dbReference type="ChEBI" id="CHEBI:15378"/>
        <dbReference type="ChEBI" id="CHEBI:15444"/>
        <dbReference type="ChEBI" id="CHEBI:57498"/>
        <dbReference type="ChEBI" id="CHEBI:456216"/>
        <dbReference type="EC" id="2.4.1.21"/>
    </reaction>
</comment>
<comment type="pathway">
    <text evidence="1">Glycan biosynthesis; glycogen biosynthesis.</text>
</comment>
<comment type="similarity">
    <text evidence="1">Belongs to the glycosyltransferase 1 family. Bacterial/plant glycogen synthase subfamily.</text>
</comment>
<gene>
    <name evidence="1" type="primary">glgA</name>
    <name type="ordered locus">RD1_2873</name>
</gene>
<reference key="1">
    <citation type="journal article" date="2007" name="J. Bacteriol.">
        <title>The complete genome sequence of Roseobacter denitrificans reveals a mixotrophic rather than photosynthetic metabolism.</title>
        <authorList>
            <person name="Swingley W.D."/>
            <person name="Sadekar S."/>
            <person name="Mastrian S.D."/>
            <person name="Matthies H.J."/>
            <person name="Hao J."/>
            <person name="Ramos H."/>
            <person name="Acharya C.R."/>
            <person name="Conrad A.L."/>
            <person name="Taylor H.L."/>
            <person name="Dejesa L.C."/>
            <person name="Shah M.K."/>
            <person name="O'Huallachain M.E."/>
            <person name="Lince M.T."/>
            <person name="Blankenship R.E."/>
            <person name="Beatty J.T."/>
            <person name="Touchman J.W."/>
        </authorList>
    </citation>
    <scope>NUCLEOTIDE SEQUENCE [LARGE SCALE GENOMIC DNA]</scope>
    <source>
        <strain>ATCC 33942 / OCh 114</strain>
    </source>
</reference>
<accession>Q165E4</accession>
<dbReference type="EC" id="2.4.1.21" evidence="1"/>
<dbReference type="EMBL" id="CP000362">
    <property type="protein sequence ID" value="ABG32399.1"/>
    <property type="molecule type" value="Genomic_DNA"/>
</dbReference>
<dbReference type="RefSeq" id="WP_011569015.1">
    <property type="nucleotide sequence ID" value="NC_008209.1"/>
</dbReference>
<dbReference type="SMR" id="Q165E4"/>
<dbReference type="STRING" id="375451.RD1_2873"/>
<dbReference type="CAZy" id="GT5">
    <property type="family name" value="Glycosyltransferase Family 5"/>
</dbReference>
<dbReference type="KEGG" id="rde:RD1_2873"/>
<dbReference type="eggNOG" id="COG0297">
    <property type="taxonomic scope" value="Bacteria"/>
</dbReference>
<dbReference type="HOGENOM" id="CLU_009583_18_2_5"/>
<dbReference type="OrthoDB" id="9808590at2"/>
<dbReference type="UniPathway" id="UPA00164"/>
<dbReference type="Proteomes" id="UP000007029">
    <property type="component" value="Chromosome"/>
</dbReference>
<dbReference type="GO" id="GO:0005829">
    <property type="term" value="C:cytosol"/>
    <property type="evidence" value="ECO:0007669"/>
    <property type="project" value="TreeGrafter"/>
</dbReference>
<dbReference type="GO" id="GO:0009011">
    <property type="term" value="F:alpha-1,4-glucan glucosyltransferase (ADP-glucose donor) activity"/>
    <property type="evidence" value="ECO:0007669"/>
    <property type="project" value="UniProtKB-UniRule"/>
</dbReference>
<dbReference type="GO" id="GO:0004373">
    <property type="term" value="F:alpha-1,4-glucan glucosyltransferase (UDP-glucose donor) activity"/>
    <property type="evidence" value="ECO:0007669"/>
    <property type="project" value="InterPro"/>
</dbReference>
<dbReference type="GO" id="GO:0005978">
    <property type="term" value="P:glycogen biosynthetic process"/>
    <property type="evidence" value="ECO:0007669"/>
    <property type="project" value="UniProtKB-UniRule"/>
</dbReference>
<dbReference type="CDD" id="cd03791">
    <property type="entry name" value="GT5_Glycogen_synthase_DULL1-like"/>
    <property type="match status" value="1"/>
</dbReference>
<dbReference type="Gene3D" id="3.40.50.2000">
    <property type="entry name" value="Glycogen Phosphorylase B"/>
    <property type="match status" value="2"/>
</dbReference>
<dbReference type="HAMAP" id="MF_00484">
    <property type="entry name" value="Glycogen_synth"/>
    <property type="match status" value="1"/>
</dbReference>
<dbReference type="InterPro" id="IPR001296">
    <property type="entry name" value="Glyco_trans_1"/>
</dbReference>
<dbReference type="InterPro" id="IPR011835">
    <property type="entry name" value="GS/SS"/>
</dbReference>
<dbReference type="InterPro" id="IPR013534">
    <property type="entry name" value="Starch_synth_cat_dom"/>
</dbReference>
<dbReference type="NCBIfam" id="TIGR02095">
    <property type="entry name" value="glgA"/>
    <property type="match status" value="1"/>
</dbReference>
<dbReference type="NCBIfam" id="NF001899">
    <property type="entry name" value="PRK00654.1-2"/>
    <property type="match status" value="1"/>
</dbReference>
<dbReference type="PANTHER" id="PTHR45825:SF11">
    <property type="entry name" value="ALPHA AMYLASE DOMAIN-CONTAINING PROTEIN"/>
    <property type="match status" value="1"/>
</dbReference>
<dbReference type="PANTHER" id="PTHR45825">
    <property type="entry name" value="GRANULE-BOUND STARCH SYNTHASE 1, CHLOROPLASTIC/AMYLOPLASTIC"/>
    <property type="match status" value="1"/>
</dbReference>
<dbReference type="Pfam" id="PF08323">
    <property type="entry name" value="Glyco_transf_5"/>
    <property type="match status" value="1"/>
</dbReference>
<dbReference type="Pfam" id="PF00534">
    <property type="entry name" value="Glycos_transf_1"/>
    <property type="match status" value="1"/>
</dbReference>
<dbReference type="SUPFAM" id="SSF53756">
    <property type="entry name" value="UDP-Glycosyltransferase/glycogen phosphorylase"/>
    <property type="match status" value="1"/>
</dbReference>
<sequence>MKVLFVASECAPFVKTGGLADVIGAVPKALAPLGVEARVMLPLYPALRVLSEGGKTVWSSDNLHGGAARLLDVRAEGLDLLLLDAPHLFDRGGNIYLDADGTDWPDNPLRFGALSWVAADIAANGAAGWQPEIVHAHDWQAGLVPAYLHQMDAPKPPCVLTIHNIAFQGLFSPDLMAPLGLDAALYTQDGMEFYGNLGFLKAGLAFADKITTVSPTYAREIMQPEFGMGLEGLLRARARDVSGILNGIDTDVWNPETDPALPKSYSLKGLKAKQQSRQAVLERFGLTPPDNAPLFCVISRLTTQKGVDVLLDVVPDLVARGAGLAVLGSGDRDLEAAFVAAAHRFPGAVGVIIGYDEDLSHLMQGGSDAILIPSRFEPCGLTQLYGLRYGTIPVVARTGGLADTIIDANEAALAATCATGVQFAPVTPDALSHAIDRCCDLFAERKTWSGMMRCAMRHPVGWETSSKAYLEVYDRLLGG</sequence>
<organism>
    <name type="scientific">Roseobacter denitrificans (strain ATCC 33942 / OCh 114)</name>
    <name type="common">Erythrobacter sp. (strain OCh 114)</name>
    <name type="synonym">Roseobacter denitrificans</name>
    <dbReference type="NCBI Taxonomy" id="375451"/>
    <lineage>
        <taxon>Bacteria</taxon>
        <taxon>Pseudomonadati</taxon>
        <taxon>Pseudomonadota</taxon>
        <taxon>Alphaproteobacteria</taxon>
        <taxon>Rhodobacterales</taxon>
        <taxon>Roseobacteraceae</taxon>
        <taxon>Roseobacter</taxon>
    </lineage>
</organism>